<gene>
    <name type="primary">yacC</name>
    <name type="ordered locus">c0151</name>
</gene>
<feature type="signal peptide" evidence="1">
    <location>
        <begin position="1"/>
        <end position="20"/>
    </location>
</feature>
<feature type="chain" id="PRO_0000041954" description="Uncharacterized protein YacC">
    <location>
        <begin position="21"/>
        <end position="115"/>
    </location>
</feature>
<proteinExistence type="inferred from homology"/>
<sequence length="115" mass="12854">MKTFFRTVLFGSLMAVCANSYALSESEAEDMADLTAVFVFLKNDCGYQNLPNGQIRRALVFFAQQNQWDLSNYDTFDMKALGEDSYRDLSGIGIPVAKKCKALARDSLSLLAYVK</sequence>
<evidence type="ECO:0000255" key="1"/>
<evidence type="ECO:0000305" key="2"/>
<reference key="1">
    <citation type="journal article" date="2002" name="Proc. Natl. Acad. Sci. U.S.A.">
        <title>Extensive mosaic structure revealed by the complete genome sequence of uropathogenic Escherichia coli.</title>
        <authorList>
            <person name="Welch R.A."/>
            <person name="Burland V."/>
            <person name="Plunkett G. III"/>
            <person name="Redford P."/>
            <person name="Roesch P."/>
            <person name="Rasko D."/>
            <person name="Buckles E.L."/>
            <person name="Liou S.-R."/>
            <person name="Boutin A."/>
            <person name="Hackett J."/>
            <person name="Stroud D."/>
            <person name="Mayhew G.F."/>
            <person name="Rose D.J."/>
            <person name="Zhou S."/>
            <person name="Schwartz D.C."/>
            <person name="Perna N.T."/>
            <person name="Mobley H.L.T."/>
            <person name="Donnenberg M.S."/>
            <person name="Blattner F.R."/>
        </authorList>
    </citation>
    <scope>NUCLEOTIDE SEQUENCE [LARGE SCALE GENOMIC DNA]</scope>
    <source>
        <strain>CFT073 / ATCC 700928 / UPEC</strain>
    </source>
</reference>
<organism>
    <name type="scientific">Escherichia coli O6:H1 (strain CFT073 / ATCC 700928 / UPEC)</name>
    <dbReference type="NCBI Taxonomy" id="199310"/>
    <lineage>
        <taxon>Bacteria</taxon>
        <taxon>Pseudomonadati</taxon>
        <taxon>Pseudomonadota</taxon>
        <taxon>Gammaproteobacteria</taxon>
        <taxon>Enterobacterales</taxon>
        <taxon>Enterobacteriaceae</taxon>
        <taxon>Escherichia</taxon>
    </lineage>
</organism>
<comment type="sequence caution" evidence="2">
    <conflict type="erroneous initiation">
        <sequence resource="EMBL-CDS" id="AAN78645"/>
    </conflict>
</comment>
<keyword id="KW-1185">Reference proteome</keyword>
<keyword id="KW-0732">Signal</keyword>
<accession>P0AA96</accession>
<accession>P23838</accession>
<accession>P75654</accession>
<dbReference type="EMBL" id="AE014075">
    <property type="protein sequence ID" value="AAN78645.1"/>
    <property type="status" value="ALT_INIT"/>
    <property type="molecule type" value="Genomic_DNA"/>
</dbReference>
<dbReference type="RefSeq" id="WP_001295568.1">
    <property type="nucleotide sequence ID" value="NZ_CP051263.1"/>
</dbReference>
<dbReference type="SMR" id="P0AA96"/>
<dbReference type="STRING" id="199310.c0151"/>
<dbReference type="KEGG" id="ecc:c0151"/>
<dbReference type="eggNOG" id="ENOG5031UDJ">
    <property type="taxonomic scope" value="Bacteria"/>
</dbReference>
<dbReference type="HOGENOM" id="CLU_142137_0_0_6"/>
<dbReference type="Proteomes" id="UP000001410">
    <property type="component" value="Chromosome"/>
</dbReference>
<dbReference type="Gene3D" id="1.20.58.1630">
    <property type="entry name" value="Chaperone lipoprotein PulS/OutS"/>
    <property type="match status" value="1"/>
</dbReference>
<dbReference type="InterPro" id="IPR019114">
    <property type="entry name" value="Chap_lipoprot_PulS/OutS-like"/>
</dbReference>
<dbReference type="InterPro" id="IPR038432">
    <property type="entry name" value="PulS/OutS-like_sf"/>
</dbReference>
<dbReference type="NCBIfam" id="NF037975">
    <property type="entry name" value="pilot_rel_YacC"/>
    <property type="match status" value="1"/>
</dbReference>
<dbReference type="Pfam" id="PF09691">
    <property type="entry name" value="T2SS_PulS_OutS"/>
    <property type="match status" value="1"/>
</dbReference>
<name>YACC_ECOL6</name>
<protein>
    <recommendedName>
        <fullName>Uncharacterized protein YacC</fullName>
    </recommendedName>
</protein>